<reference key="1">
    <citation type="journal article" date="2005" name="Science">
        <title>Extensive DNA inversions in the B. fragilis genome control variable gene expression.</title>
        <authorList>
            <person name="Cerdeno-Tarraga A.-M."/>
            <person name="Patrick S."/>
            <person name="Crossman L.C."/>
            <person name="Blakely G."/>
            <person name="Abratt V."/>
            <person name="Lennard N."/>
            <person name="Poxton I."/>
            <person name="Duerden B."/>
            <person name="Harris B."/>
            <person name="Quail M.A."/>
            <person name="Barron A."/>
            <person name="Clark L."/>
            <person name="Corton C."/>
            <person name="Doggett J."/>
            <person name="Holden M.T.G."/>
            <person name="Larke N."/>
            <person name="Line A."/>
            <person name="Lord A."/>
            <person name="Norbertczak H."/>
            <person name="Ormond D."/>
            <person name="Price C."/>
            <person name="Rabbinowitsch E."/>
            <person name="Woodward J."/>
            <person name="Barrell B.G."/>
            <person name="Parkhill J."/>
        </authorList>
    </citation>
    <scope>NUCLEOTIDE SEQUENCE [LARGE SCALE GENOMIC DNA]</scope>
    <source>
        <strain>ATCC 25285 / DSM 2151 / CCUG 4856 / JCM 11019 / LMG 10263 / NCTC 9343 / Onslow / VPI 2553 / EN-2</strain>
    </source>
</reference>
<accession>Q5L8B3</accession>
<organism>
    <name type="scientific">Bacteroides fragilis (strain ATCC 25285 / DSM 2151 / CCUG 4856 / JCM 11019 / LMG 10263 / NCTC 9343 / Onslow / VPI 2553 / EN-2)</name>
    <dbReference type="NCBI Taxonomy" id="272559"/>
    <lineage>
        <taxon>Bacteria</taxon>
        <taxon>Pseudomonadati</taxon>
        <taxon>Bacteroidota</taxon>
        <taxon>Bacteroidia</taxon>
        <taxon>Bacteroidales</taxon>
        <taxon>Bacteroidaceae</taxon>
        <taxon>Bacteroides</taxon>
    </lineage>
</organism>
<protein>
    <recommendedName>
        <fullName evidence="1">Small ribosomal subunit protein uS19</fullName>
    </recommendedName>
    <alternativeName>
        <fullName evidence="2">30S ribosomal protein S19</fullName>
    </alternativeName>
</protein>
<dbReference type="EMBL" id="CR626927">
    <property type="protein sequence ID" value="CAH09675.1"/>
    <property type="molecule type" value="Genomic_DNA"/>
</dbReference>
<dbReference type="RefSeq" id="WP_005782197.1">
    <property type="nucleotide sequence ID" value="NZ_UFTH01000001.1"/>
</dbReference>
<dbReference type="SMR" id="Q5L8B3"/>
<dbReference type="PaxDb" id="272559-BF9343_3894"/>
<dbReference type="GeneID" id="93105320"/>
<dbReference type="KEGG" id="bfs:BF9343_3894"/>
<dbReference type="eggNOG" id="COG0185">
    <property type="taxonomic scope" value="Bacteria"/>
</dbReference>
<dbReference type="HOGENOM" id="CLU_144911_0_1_10"/>
<dbReference type="Proteomes" id="UP000006731">
    <property type="component" value="Chromosome"/>
</dbReference>
<dbReference type="GO" id="GO:0005737">
    <property type="term" value="C:cytoplasm"/>
    <property type="evidence" value="ECO:0007669"/>
    <property type="project" value="UniProtKB-ARBA"/>
</dbReference>
<dbReference type="GO" id="GO:0015935">
    <property type="term" value="C:small ribosomal subunit"/>
    <property type="evidence" value="ECO:0007669"/>
    <property type="project" value="InterPro"/>
</dbReference>
<dbReference type="GO" id="GO:0019843">
    <property type="term" value="F:rRNA binding"/>
    <property type="evidence" value="ECO:0007669"/>
    <property type="project" value="UniProtKB-UniRule"/>
</dbReference>
<dbReference type="GO" id="GO:0003735">
    <property type="term" value="F:structural constituent of ribosome"/>
    <property type="evidence" value="ECO:0007669"/>
    <property type="project" value="InterPro"/>
</dbReference>
<dbReference type="GO" id="GO:0000028">
    <property type="term" value="P:ribosomal small subunit assembly"/>
    <property type="evidence" value="ECO:0007669"/>
    <property type="project" value="TreeGrafter"/>
</dbReference>
<dbReference type="GO" id="GO:0006412">
    <property type="term" value="P:translation"/>
    <property type="evidence" value="ECO:0007669"/>
    <property type="project" value="UniProtKB-UniRule"/>
</dbReference>
<dbReference type="FunFam" id="3.30.860.10:FF:000001">
    <property type="entry name" value="30S ribosomal protein S19"/>
    <property type="match status" value="1"/>
</dbReference>
<dbReference type="Gene3D" id="3.30.860.10">
    <property type="entry name" value="30s Ribosomal Protein S19, Chain A"/>
    <property type="match status" value="1"/>
</dbReference>
<dbReference type="HAMAP" id="MF_00531">
    <property type="entry name" value="Ribosomal_uS19"/>
    <property type="match status" value="1"/>
</dbReference>
<dbReference type="InterPro" id="IPR002222">
    <property type="entry name" value="Ribosomal_uS19"/>
</dbReference>
<dbReference type="InterPro" id="IPR005732">
    <property type="entry name" value="Ribosomal_uS19_bac-type"/>
</dbReference>
<dbReference type="InterPro" id="IPR020934">
    <property type="entry name" value="Ribosomal_uS19_CS"/>
</dbReference>
<dbReference type="InterPro" id="IPR023575">
    <property type="entry name" value="Ribosomal_uS19_SF"/>
</dbReference>
<dbReference type="NCBIfam" id="TIGR01050">
    <property type="entry name" value="rpsS_bact"/>
    <property type="match status" value="1"/>
</dbReference>
<dbReference type="PANTHER" id="PTHR11880">
    <property type="entry name" value="RIBOSOMAL PROTEIN S19P FAMILY MEMBER"/>
    <property type="match status" value="1"/>
</dbReference>
<dbReference type="PANTHER" id="PTHR11880:SF8">
    <property type="entry name" value="SMALL RIBOSOMAL SUBUNIT PROTEIN US19M"/>
    <property type="match status" value="1"/>
</dbReference>
<dbReference type="Pfam" id="PF00203">
    <property type="entry name" value="Ribosomal_S19"/>
    <property type="match status" value="1"/>
</dbReference>
<dbReference type="PIRSF" id="PIRSF002144">
    <property type="entry name" value="Ribosomal_S19"/>
    <property type="match status" value="1"/>
</dbReference>
<dbReference type="PRINTS" id="PR00975">
    <property type="entry name" value="RIBOSOMALS19"/>
</dbReference>
<dbReference type="SUPFAM" id="SSF54570">
    <property type="entry name" value="Ribosomal protein S19"/>
    <property type="match status" value="1"/>
</dbReference>
<dbReference type="PROSITE" id="PS00323">
    <property type="entry name" value="RIBOSOMAL_S19"/>
    <property type="match status" value="1"/>
</dbReference>
<keyword id="KW-0687">Ribonucleoprotein</keyword>
<keyword id="KW-0689">Ribosomal protein</keyword>
<keyword id="KW-0694">RNA-binding</keyword>
<keyword id="KW-0699">rRNA-binding</keyword>
<sequence length="89" mass="9911">MSRSLKKGPYINVKLEKKVLAMNESGKKVVVKTWSRASMISPDFVGHTVAVHNGNKFIPVYVTENMVGHKLGEFAPTRTFRGHAGNKKK</sequence>
<comment type="function">
    <text evidence="1">Protein S19 forms a complex with S13 that binds strongly to the 16S ribosomal RNA.</text>
</comment>
<comment type="similarity">
    <text evidence="1">Belongs to the universal ribosomal protein uS19 family.</text>
</comment>
<feature type="chain" id="PRO_0000265328" description="Small ribosomal subunit protein uS19">
    <location>
        <begin position="1"/>
        <end position="89"/>
    </location>
</feature>
<gene>
    <name evidence="1" type="primary">rpsS</name>
    <name type="ordered locus">BF3999</name>
</gene>
<evidence type="ECO:0000255" key="1">
    <source>
        <dbReference type="HAMAP-Rule" id="MF_00531"/>
    </source>
</evidence>
<evidence type="ECO:0000305" key="2"/>
<name>RS19_BACFN</name>
<proteinExistence type="inferred from homology"/>